<feature type="chain" id="PRO_1000064629" description="Macrodomain Ter protein">
    <location>
        <begin position="1"/>
        <end position="151"/>
    </location>
</feature>
<gene>
    <name evidence="1" type="primary">matP</name>
    <name type="ordered locus">ESA_02392</name>
</gene>
<protein>
    <recommendedName>
        <fullName evidence="1">Macrodomain Ter protein</fullName>
    </recommendedName>
</protein>
<organism>
    <name type="scientific">Cronobacter sakazakii (strain ATCC BAA-894)</name>
    <name type="common">Enterobacter sakazakii</name>
    <dbReference type="NCBI Taxonomy" id="290339"/>
    <lineage>
        <taxon>Bacteria</taxon>
        <taxon>Pseudomonadati</taxon>
        <taxon>Pseudomonadota</taxon>
        <taxon>Gammaproteobacteria</taxon>
        <taxon>Enterobacterales</taxon>
        <taxon>Enterobacteriaceae</taxon>
        <taxon>Cronobacter</taxon>
    </lineage>
</organism>
<evidence type="ECO:0000255" key="1">
    <source>
        <dbReference type="HAMAP-Rule" id="MF_01073"/>
    </source>
</evidence>
<reference key="1">
    <citation type="journal article" date="2010" name="PLoS ONE">
        <title>Genome sequence of Cronobacter sakazakii BAA-894 and comparative genomic hybridization analysis with other Cronobacter species.</title>
        <authorList>
            <person name="Kucerova E."/>
            <person name="Clifton S.W."/>
            <person name="Xia X.Q."/>
            <person name="Long F."/>
            <person name="Porwollik S."/>
            <person name="Fulton L."/>
            <person name="Fronick C."/>
            <person name="Minx P."/>
            <person name="Kyung K."/>
            <person name="Warren W."/>
            <person name="Fulton R."/>
            <person name="Feng D."/>
            <person name="Wollam A."/>
            <person name="Shah N."/>
            <person name="Bhonagiri V."/>
            <person name="Nash W.E."/>
            <person name="Hallsworth-Pepin K."/>
            <person name="Wilson R.K."/>
            <person name="McClelland M."/>
            <person name="Forsythe S.J."/>
        </authorList>
    </citation>
    <scope>NUCLEOTIDE SEQUENCE [LARGE SCALE GENOMIC DNA]</scope>
    <source>
        <strain>ATCC BAA-894</strain>
    </source>
</reference>
<accession>A7MFW6</accession>
<comment type="function">
    <text evidence="1">Required for spatial organization of the terminus region of the chromosome (Ter macrodomain) during the cell cycle. Prevents early segregation of duplicated Ter macrodomains during cell division. Binds specifically to matS, which is a 13 bp signature motif repeated within the Ter macrodomain.</text>
</comment>
<comment type="subunit">
    <text evidence="1">Homodimer.</text>
</comment>
<comment type="subcellular location">
    <subcellularLocation>
        <location evidence="1">Cytoplasm</location>
    </subcellularLocation>
</comment>
<comment type="similarity">
    <text evidence="1">Belongs to the MatP family.</text>
</comment>
<name>MATP_CROS8</name>
<dbReference type="EMBL" id="CP000783">
    <property type="protein sequence ID" value="ABU77638.1"/>
    <property type="molecule type" value="Genomic_DNA"/>
</dbReference>
<dbReference type="RefSeq" id="WP_007849091.1">
    <property type="nucleotide sequence ID" value="NC_009778.1"/>
</dbReference>
<dbReference type="SMR" id="A7MFW6"/>
<dbReference type="GeneID" id="56731162"/>
<dbReference type="KEGG" id="esa:ESA_02392"/>
<dbReference type="HOGENOM" id="CLU_142157_0_0_6"/>
<dbReference type="Proteomes" id="UP000000260">
    <property type="component" value="Chromosome"/>
</dbReference>
<dbReference type="GO" id="GO:0005737">
    <property type="term" value="C:cytoplasm"/>
    <property type="evidence" value="ECO:0007669"/>
    <property type="project" value="UniProtKB-SubCell"/>
</dbReference>
<dbReference type="GO" id="GO:0043565">
    <property type="term" value="F:sequence-specific DNA binding"/>
    <property type="evidence" value="ECO:0007669"/>
    <property type="project" value="UniProtKB-UniRule"/>
</dbReference>
<dbReference type="GO" id="GO:0051301">
    <property type="term" value="P:cell division"/>
    <property type="evidence" value="ECO:0007669"/>
    <property type="project" value="UniProtKB-UniRule"/>
</dbReference>
<dbReference type="GO" id="GO:0006355">
    <property type="term" value="P:regulation of DNA-templated transcription"/>
    <property type="evidence" value="ECO:0007669"/>
    <property type="project" value="InterPro"/>
</dbReference>
<dbReference type="Gene3D" id="1.20.1270.380">
    <property type="entry name" value="MatP, N-terminal domain"/>
    <property type="match status" value="1"/>
</dbReference>
<dbReference type="Gene3D" id="1.10.1220.10">
    <property type="entry name" value="Met repressor-like"/>
    <property type="match status" value="1"/>
</dbReference>
<dbReference type="HAMAP" id="MF_01073">
    <property type="entry name" value="MatP"/>
    <property type="match status" value="1"/>
</dbReference>
<dbReference type="InterPro" id="IPR013321">
    <property type="entry name" value="Arc_rbn_hlx_hlx"/>
</dbReference>
<dbReference type="InterPro" id="IPR009390">
    <property type="entry name" value="MatP"/>
</dbReference>
<dbReference type="InterPro" id="IPR035375">
    <property type="entry name" value="MatP_C"/>
</dbReference>
<dbReference type="InterPro" id="IPR035087">
    <property type="entry name" value="MatP_N"/>
</dbReference>
<dbReference type="InterPro" id="IPR038339">
    <property type="entry name" value="MatP_N_sf"/>
</dbReference>
<dbReference type="NCBIfam" id="NF003471">
    <property type="entry name" value="PRK05097.1"/>
    <property type="match status" value="1"/>
</dbReference>
<dbReference type="Pfam" id="PF06303">
    <property type="entry name" value="MatP"/>
    <property type="match status" value="1"/>
</dbReference>
<dbReference type="Pfam" id="PF17414">
    <property type="entry name" value="MatP_C"/>
    <property type="match status" value="1"/>
</dbReference>
<keyword id="KW-0131">Cell cycle</keyword>
<keyword id="KW-0132">Cell division</keyword>
<keyword id="KW-0963">Cytoplasm</keyword>
<keyword id="KW-0238">DNA-binding</keyword>
<keyword id="KW-1185">Reference proteome</keyword>
<sequence>MKYQQLENLESGWKWKYLVKKHREGELITRYVEASAAKEAVDLLLGMENEPVRVLGWIDQHMNPALQNRLKQTIRARRKRHFNAEHQHTRKKSIDLEFMVWQRLAGLAQRRGITLSETIVQLIEDAERKEKYENHMSTLKQDLQALLGKKE</sequence>
<proteinExistence type="inferred from homology"/>